<keyword id="KW-0028">Amino-acid biosynthesis</keyword>
<keyword id="KW-0963">Cytoplasm</keyword>
<keyword id="KW-0486">Methionine biosynthesis</keyword>
<keyword id="KW-0663">Pyridoxal phosphate</keyword>
<keyword id="KW-0808">Transferase</keyword>
<feature type="chain" id="PRO_0000114759" description="Cystathionine gamma-synthase">
    <location>
        <begin position="1"/>
        <end position="380"/>
    </location>
</feature>
<feature type="modified residue" description="N6-(pyridoxal phosphate)lysine" evidence="1">
    <location>
        <position position="195"/>
    </location>
</feature>
<dbReference type="EC" id="2.5.1.48"/>
<dbReference type="EMBL" id="AE001439">
    <property type="protein sequence ID" value="AAD05677.1"/>
    <property type="molecule type" value="Genomic_DNA"/>
</dbReference>
<dbReference type="PIR" id="D71973">
    <property type="entry name" value="D71973"/>
</dbReference>
<dbReference type="RefSeq" id="WP_001242773.1">
    <property type="nucleotide sequence ID" value="NC_000921.1"/>
</dbReference>
<dbReference type="SMR" id="Q9ZMW7"/>
<dbReference type="KEGG" id="hpj:jhp_0098"/>
<dbReference type="eggNOG" id="COG0626">
    <property type="taxonomic scope" value="Bacteria"/>
</dbReference>
<dbReference type="Proteomes" id="UP000000804">
    <property type="component" value="Chromosome"/>
</dbReference>
<dbReference type="GO" id="GO:0005737">
    <property type="term" value="C:cytoplasm"/>
    <property type="evidence" value="ECO:0007669"/>
    <property type="project" value="UniProtKB-SubCell"/>
</dbReference>
<dbReference type="GO" id="GO:0004123">
    <property type="term" value="F:cystathionine gamma-lyase activity"/>
    <property type="evidence" value="ECO:0007669"/>
    <property type="project" value="TreeGrafter"/>
</dbReference>
<dbReference type="GO" id="GO:0003962">
    <property type="term" value="F:cystathionine gamma-synthase activity"/>
    <property type="evidence" value="ECO:0007669"/>
    <property type="project" value="UniProtKB-EC"/>
</dbReference>
<dbReference type="GO" id="GO:0030170">
    <property type="term" value="F:pyridoxal phosphate binding"/>
    <property type="evidence" value="ECO:0007669"/>
    <property type="project" value="InterPro"/>
</dbReference>
<dbReference type="GO" id="GO:0019343">
    <property type="term" value="P:cysteine biosynthetic process via cystathionine"/>
    <property type="evidence" value="ECO:0007669"/>
    <property type="project" value="TreeGrafter"/>
</dbReference>
<dbReference type="GO" id="GO:0009086">
    <property type="term" value="P:methionine biosynthetic process"/>
    <property type="evidence" value="ECO:0007669"/>
    <property type="project" value="UniProtKB-KW"/>
</dbReference>
<dbReference type="GO" id="GO:0019346">
    <property type="term" value="P:transsulfuration"/>
    <property type="evidence" value="ECO:0007669"/>
    <property type="project" value="InterPro"/>
</dbReference>
<dbReference type="CDD" id="cd00614">
    <property type="entry name" value="CGS_like"/>
    <property type="match status" value="1"/>
</dbReference>
<dbReference type="FunFam" id="3.90.1150.10:FF:000008">
    <property type="entry name" value="Cystathionine gamma-synthase"/>
    <property type="match status" value="1"/>
</dbReference>
<dbReference type="FunFam" id="3.40.640.10:FF:000009">
    <property type="entry name" value="Cystathionine gamma-synthase homolog"/>
    <property type="match status" value="1"/>
</dbReference>
<dbReference type="Gene3D" id="3.90.1150.10">
    <property type="entry name" value="Aspartate Aminotransferase, domain 1"/>
    <property type="match status" value="1"/>
</dbReference>
<dbReference type="Gene3D" id="3.40.640.10">
    <property type="entry name" value="Type I PLP-dependent aspartate aminotransferase-like (Major domain)"/>
    <property type="match status" value="1"/>
</dbReference>
<dbReference type="InterPro" id="IPR000277">
    <property type="entry name" value="Cys/Met-Metab_PyrdxlP-dep_enz"/>
</dbReference>
<dbReference type="InterPro" id="IPR054542">
    <property type="entry name" value="Cys_met_metab_PP"/>
</dbReference>
<dbReference type="InterPro" id="IPR015424">
    <property type="entry name" value="PyrdxlP-dep_Trfase"/>
</dbReference>
<dbReference type="InterPro" id="IPR015421">
    <property type="entry name" value="PyrdxlP-dep_Trfase_major"/>
</dbReference>
<dbReference type="InterPro" id="IPR015422">
    <property type="entry name" value="PyrdxlP-dep_Trfase_small"/>
</dbReference>
<dbReference type="NCBIfam" id="NF004821">
    <property type="entry name" value="PRK06176.1"/>
    <property type="match status" value="1"/>
</dbReference>
<dbReference type="PANTHER" id="PTHR11808:SF15">
    <property type="entry name" value="CYSTATHIONINE GAMMA-LYASE"/>
    <property type="match status" value="1"/>
</dbReference>
<dbReference type="PANTHER" id="PTHR11808">
    <property type="entry name" value="TRANS-SULFURATION ENZYME FAMILY MEMBER"/>
    <property type="match status" value="1"/>
</dbReference>
<dbReference type="Pfam" id="PF01053">
    <property type="entry name" value="Cys_Met_Meta_PP"/>
    <property type="match status" value="1"/>
</dbReference>
<dbReference type="PIRSF" id="PIRSF001434">
    <property type="entry name" value="CGS"/>
    <property type="match status" value="1"/>
</dbReference>
<dbReference type="SUPFAM" id="SSF53383">
    <property type="entry name" value="PLP-dependent transferases"/>
    <property type="match status" value="1"/>
</dbReference>
<dbReference type="PROSITE" id="PS00868">
    <property type="entry name" value="CYS_MET_METAB_PP"/>
    <property type="match status" value="1"/>
</dbReference>
<evidence type="ECO:0000250" key="1"/>
<evidence type="ECO:0000305" key="2"/>
<reference key="1">
    <citation type="journal article" date="1999" name="Nature">
        <title>Genomic sequence comparison of two unrelated isolates of the human gastric pathogen Helicobacter pylori.</title>
        <authorList>
            <person name="Alm R.A."/>
            <person name="Ling L.-S.L."/>
            <person name="Moir D.T."/>
            <person name="King B.L."/>
            <person name="Brown E.D."/>
            <person name="Doig P.C."/>
            <person name="Smith D.R."/>
            <person name="Noonan B."/>
            <person name="Guild B.C."/>
            <person name="deJonge B.L."/>
            <person name="Carmel G."/>
            <person name="Tummino P.J."/>
            <person name="Caruso A."/>
            <person name="Uria-Nickelsen M."/>
            <person name="Mills D.M."/>
            <person name="Ives C."/>
            <person name="Gibson R."/>
            <person name="Merberg D."/>
            <person name="Mills S.D."/>
            <person name="Jiang Q."/>
            <person name="Taylor D.E."/>
            <person name="Vovis G.F."/>
            <person name="Trust T.J."/>
        </authorList>
    </citation>
    <scope>NUCLEOTIDE SEQUENCE [LARGE SCALE GENOMIC DNA]</scope>
    <source>
        <strain>J99 / ATCC 700824</strain>
    </source>
</reference>
<protein>
    <recommendedName>
        <fullName>Cystathionine gamma-synthase</fullName>
        <shortName>CGS</shortName>
        <ecNumber>2.5.1.48</ecNumber>
    </recommendedName>
    <alternativeName>
        <fullName>O-succinylhomoserine (thiol)-lyase</fullName>
    </alternativeName>
</protein>
<sequence>MRMQTKLIHGGINEDATTGAVSVPIYQTSTYRQDAIGRHKGYEYSRSGNPTRFALEELIADLEGGVKGFAFASGLAGIHAVFSLLQSGDHVLLGDDVYGGNFRLFNKVLVKNGLSCTIIDTSDLSQIKKAIKPNTKALYLETPSNPLLKITDLAQCASVAKEHNLLTIVDNTFATPYCQNPLLLGTDIVAHNGTKYLGGHSDVVAGLVTTNNEALAQEFDFFQNAIGGVLGLQDSWLLQRGIKTLGLRMEAHQKNALCVAEFLEKHPKVERVYYPGLPTHPNHELAKAQMRGFSGMFSFTLKNDSEAVAFVESLKLFILGESLGGVESLVGIPALMTHACIPKAQREAAGIRDGLVRLSVGIEHEQDLLEDLDQAFAKIS</sequence>
<name>METB_HELPJ</name>
<proteinExistence type="inferred from homology"/>
<comment type="function">
    <text evidence="1">Catalyzes the formation of L-cystathionine from O-succinyl-L-homoserine (OSHS) and L-cysteine, via a gamma-replacement reaction. In the absence of thiol, catalyzes gamma-elimination to form 2-oxobutanoate, succinate and ammonia (By similarity).</text>
</comment>
<comment type="catalytic activity">
    <reaction>
        <text>O-succinyl-L-homoserine + L-cysteine = L,L-cystathionine + succinate + H(+)</text>
        <dbReference type="Rhea" id="RHEA:20397"/>
        <dbReference type="ChEBI" id="CHEBI:15378"/>
        <dbReference type="ChEBI" id="CHEBI:30031"/>
        <dbReference type="ChEBI" id="CHEBI:35235"/>
        <dbReference type="ChEBI" id="CHEBI:57661"/>
        <dbReference type="ChEBI" id="CHEBI:58161"/>
        <dbReference type="EC" id="2.5.1.48"/>
    </reaction>
</comment>
<comment type="cofactor">
    <cofactor evidence="1">
        <name>pyridoxal 5'-phosphate</name>
        <dbReference type="ChEBI" id="CHEBI:597326"/>
    </cofactor>
    <text evidence="1">Binds 1 pyridoxal phosphate per subunit.</text>
</comment>
<comment type="subunit">
    <text evidence="1">Homotetramer.</text>
</comment>
<comment type="subcellular location">
    <subcellularLocation>
        <location evidence="1">Cytoplasm</location>
    </subcellularLocation>
</comment>
<comment type="similarity">
    <text evidence="2">Belongs to the trans-sulfuration enzymes family.</text>
</comment>
<accession>Q9ZMW7</accession>
<organism>
    <name type="scientific">Helicobacter pylori (strain J99 / ATCC 700824)</name>
    <name type="common">Campylobacter pylori J99</name>
    <dbReference type="NCBI Taxonomy" id="85963"/>
    <lineage>
        <taxon>Bacteria</taxon>
        <taxon>Pseudomonadati</taxon>
        <taxon>Campylobacterota</taxon>
        <taxon>Epsilonproteobacteria</taxon>
        <taxon>Campylobacterales</taxon>
        <taxon>Helicobacteraceae</taxon>
        <taxon>Helicobacter</taxon>
    </lineage>
</organism>
<gene>
    <name type="primary">metB</name>
    <name type="ordered locus">jhp_0098</name>
</gene>